<dbReference type="EC" id="1.4.1.2" evidence="5 8 9"/>
<dbReference type="EMBL" id="X73124">
    <property type="protein sequence ID" value="CAA51631.1"/>
    <property type="molecule type" value="Genomic_DNA"/>
</dbReference>
<dbReference type="EMBL" id="AB194695">
    <property type="protein sequence ID" value="BAD69594.1"/>
    <property type="molecule type" value="Genomic_DNA"/>
</dbReference>
<dbReference type="EMBL" id="AL009126">
    <property type="protein sequence ID" value="CAB15806.2"/>
    <property type="molecule type" value="Genomic_DNA"/>
</dbReference>
<dbReference type="EMBL" id="S79622">
    <property type="status" value="NOT_ANNOTATED_CDS"/>
    <property type="molecule type" value="Genomic_DNA"/>
</dbReference>
<dbReference type="PIR" id="A70055">
    <property type="entry name" value="A70055"/>
</dbReference>
<dbReference type="RefSeq" id="NP_391659.2">
    <property type="nucleotide sequence ID" value="NC_000964.3"/>
</dbReference>
<dbReference type="RefSeq" id="WP_003227482.1">
    <property type="nucleotide sequence ID" value="NZ_OZ025638.1"/>
</dbReference>
<dbReference type="PDB" id="3K92">
    <property type="method" value="X-ray"/>
    <property type="resolution" value="2.30 A"/>
    <property type="chains" value="A/B/C/D/E/F=1-424"/>
</dbReference>
<dbReference type="PDBsum" id="3K92"/>
<dbReference type="SMR" id="P39633"/>
<dbReference type="FunCoup" id="P39633">
    <property type="interactions" value="516"/>
</dbReference>
<dbReference type="IntAct" id="P39633">
    <property type="interactions" value="1"/>
</dbReference>
<dbReference type="STRING" id="224308.BSU37790"/>
<dbReference type="MoonProt" id="P39633"/>
<dbReference type="jPOST" id="P39633"/>
<dbReference type="PaxDb" id="224308-BSU37790"/>
<dbReference type="EnsemblBacteria" id="CAB15806">
    <property type="protein sequence ID" value="CAB15806"/>
    <property type="gene ID" value="BSU_37790"/>
</dbReference>
<dbReference type="GeneID" id="937066"/>
<dbReference type="KEGG" id="bsu:BSU37790"/>
<dbReference type="PATRIC" id="fig|224308.179.peg.4091"/>
<dbReference type="eggNOG" id="COG0334">
    <property type="taxonomic scope" value="Bacteria"/>
</dbReference>
<dbReference type="InParanoid" id="P39633"/>
<dbReference type="OrthoDB" id="9803297at2"/>
<dbReference type="PhylomeDB" id="P39633"/>
<dbReference type="BioCyc" id="BSUB:BSU37790-MONOMER"/>
<dbReference type="BRENDA" id="1.4.1.2">
    <property type="organism ID" value="658"/>
</dbReference>
<dbReference type="SABIO-RK" id="P39633"/>
<dbReference type="EvolutionaryTrace" id="P39633"/>
<dbReference type="Proteomes" id="UP000001570">
    <property type="component" value="Chromosome"/>
</dbReference>
<dbReference type="GO" id="GO:0004352">
    <property type="term" value="F:glutamate dehydrogenase (NAD+) activity"/>
    <property type="evidence" value="ECO:0000314"/>
    <property type="project" value="UniProtKB"/>
</dbReference>
<dbReference type="GO" id="GO:0006520">
    <property type="term" value="P:amino acid metabolic process"/>
    <property type="evidence" value="ECO:0000315"/>
    <property type="project" value="UniProtKB"/>
</dbReference>
<dbReference type="GO" id="GO:0006538">
    <property type="term" value="P:glutamate catabolic process"/>
    <property type="evidence" value="ECO:0000318"/>
    <property type="project" value="GO_Central"/>
</dbReference>
<dbReference type="CDD" id="cd01076">
    <property type="entry name" value="NAD_bind_1_Glu_DH"/>
    <property type="match status" value="1"/>
</dbReference>
<dbReference type="FunFam" id="3.40.50.10860:FF:000008">
    <property type="entry name" value="Glutamate dehydrogenase"/>
    <property type="match status" value="1"/>
</dbReference>
<dbReference type="FunFam" id="3.40.50.720:FF:000212">
    <property type="entry name" value="Glutamate dehydrogenase"/>
    <property type="match status" value="1"/>
</dbReference>
<dbReference type="Gene3D" id="1.10.8.1210">
    <property type="match status" value="2"/>
</dbReference>
<dbReference type="Gene3D" id="3.40.50.10860">
    <property type="entry name" value="Leucine Dehydrogenase, chain A, domain 1"/>
    <property type="match status" value="1"/>
</dbReference>
<dbReference type="Gene3D" id="3.40.50.720">
    <property type="entry name" value="NAD(P)-binding Rossmann-like Domain"/>
    <property type="match status" value="1"/>
</dbReference>
<dbReference type="InterPro" id="IPR046346">
    <property type="entry name" value="Aminoacid_DH-like_N_sf"/>
</dbReference>
<dbReference type="InterPro" id="IPR006095">
    <property type="entry name" value="Glu/Leu/Phe/Val/Trp_DH"/>
</dbReference>
<dbReference type="InterPro" id="IPR006096">
    <property type="entry name" value="Glu/Leu/Phe/Val/Trp_DH_C"/>
</dbReference>
<dbReference type="InterPro" id="IPR006097">
    <property type="entry name" value="Glu/Leu/Phe/Val/Trp_DH_dimer"/>
</dbReference>
<dbReference type="InterPro" id="IPR033524">
    <property type="entry name" value="Glu/Leu/Phe/Val_DH_AS"/>
</dbReference>
<dbReference type="InterPro" id="IPR014362">
    <property type="entry name" value="Glu_DH"/>
</dbReference>
<dbReference type="InterPro" id="IPR036291">
    <property type="entry name" value="NAD(P)-bd_dom_sf"/>
</dbReference>
<dbReference type="InterPro" id="IPR033922">
    <property type="entry name" value="NAD_bind_Glu_DH"/>
</dbReference>
<dbReference type="PANTHER" id="PTHR11606">
    <property type="entry name" value="GLUTAMATE DEHYDROGENASE"/>
    <property type="match status" value="1"/>
</dbReference>
<dbReference type="PANTHER" id="PTHR11606:SF13">
    <property type="entry name" value="GLUTAMATE DEHYDROGENASE 1, MITOCHONDRIAL"/>
    <property type="match status" value="1"/>
</dbReference>
<dbReference type="Pfam" id="PF00208">
    <property type="entry name" value="ELFV_dehydrog"/>
    <property type="match status" value="1"/>
</dbReference>
<dbReference type="Pfam" id="PF02812">
    <property type="entry name" value="ELFV_dehydrog_N"/>
    <property type="match status" value="1"/>
</dbReference>
<dbReference type="PIRSF" id="PIRSF000185">
    <property type="entry name" value="Glu_DH"/>
    <property type="match status" value="1"/>
</dbReference>
<dbReference type="PRINTS" id="PR00082">
    <property type="entry name" value="GLFDHDRGNASE"/>
</dbReference>
<dbReference type="SMART" id="SM00839">
    <property type="entry name" value="ELFV_dehydrog"/>
    <property type="match status" value="1"/>
</dbReference>
<dbReference type="SUPFAM" id="SSF53223">
    <property type="entry name" value="Aminoacid dehydrogenase-like, N-terminal domain"/>
    <property type="match status" value="1"/>
</dbReference>
<dbReference type="SUPFAM" id="SSF51735">
    <property type="entry name" value="NAD(P)-binding Rossmann-fold domains"/>
    <property type="match status" value="1"/>
</dbReference>
<dbReference type="PROSITE" id="PS00074">
    <property type="entry name" value="GLFV_DEHYDROGENASE"/>
    <property type="match status" value="1"/>
</dbReference>
<keyword id="KW-0002">3D-structure</keyword>
<keyword id="KW-0903">Direct protein sequencing</keyword>
<keyword id="KW-0520">NAD</keyword>
<keyword id="KW-0560">Oxidoreductase</keyword>
<keyword id="KW-1185">Reference proteome</keyword>
<organism>
    <name type="scientific">Bacillus subtilis (strain 168)</name>
    <dbReference type="NCBI Taxonomy" id="224308"/>
    <lineage>
        <taxon>Bacteria</taxon>
        <taxon>Bacillati</taxon>
        <taxon>Bacillota</taxon>
        <taxon>Bacilli</taxon>
        <taxon>Bacillales</taxon>
        <taxon>Bacillaceae</taxon>
        <taxon>Bacillus</taxon>
    </lineage>
</organism>
<reference key="1">
    <citation type="journal article" date="1993" name="Mol. Microbiol.">
        <title>Bacillus subtilis genome project: cloning and sequencing of the 97 kb region from 325 degrees to 333 degrees.</title>
        <authorList>
            <person name="Glaser P."/>
            <person name="Kunst F."/>
            <person name="Arnaud M."/>
            <person name="Coudart M.P."/>
            <person name="Gonzales W."/>
            <person name="Hullo M.-F."/>
            <person name="Ionescu M."/>
            <person name="Lubochinsky B."/>
            <person name="Marcelino L."/>
            <person name="Moszer I."/>
            <person name="Presecan E."/>
            <person name="Santana M."/>
            <person name="Schneider E."/>
            <person name="Schweizer J."/>
            <person name="Vertes A."/>
            <person name="Rapoport G."/>
            <person name="Danchin A."/>
        </authorList>
    </citation>
    <scope>NUCLEOTIDE SEQUENCE [GENOMIC DNA]</scope>
    <source>
        <strain>168</strain>
    </source>
</reference>
<reference key="2">
    <citation type="submission" date="2004-11" db="EMBL/GenBank/DDBJ databases">
        <title>Low thermostability of the NAD+ specific glutamate dehydrogenase from Bacillus subtilis ISW1214: cloning, purification and characterization.</title>
        <authorList>
            <person name="Khan M.H."/>
            <person name="Itoh K."/>
            <person name="Kim H."/>
            <person name="Ashida H."/>
            <person name="Ishikawa T."/>
            <person name="Shibata H."/>
            <person name="Sawa Y."/>
        </authorList>
    </citation>
    <scope>NUCLEOTIDE SEQUENCE [GENOMIC DNA]</scope>
    <source>
        <strain>ISW1214</strain>
    </source>
</reference>
<reference key="3">
    <citation type="journal article" date="1997" name="Nature">
        <title>The complete genome sequence of the Gram-positive bacterium Bacillus subtilis.</title>
        <authorList>
            <person name="Kunst F."/>
            <person name="Ogasawara N."/>
            <person name="Moszer I."/>
            <person name="Albertini A.M."/>
            <person name="Alloni G."/>
            <person name="Azevedo V."/>
            <person name="Bertero M.G."/>
            <person name="Bessieres P."/>
            <person name="Bolotin A."/>
            <person name="Borchert S."/>
            <person name="Borriss R."/>
            <person name="Boursier L."/>
            <person name="Brans A."/>
            <person name="Braun M."/>
            <person name="Brignell S.C."/>
            <person name="Bron S."/>
            <person name="Brouillet S."/>
            <person name="Bruschi C.V."/>
            <person name="Caldwell B."/>
            <person name="Capuano V."/>
            <person name="Carter N.M."/>
            <person name="Choi S.-K."/>
            <person name="Codani J.-J."/>
            <person name="Connerton I.F."/>
            <person name="Cummings N.J."/>
            <person name="Daniel R.A."/>
            <person name="Denizot F."/>
            <person name="Devine K.M."/>
            <person name="Duesterhoeft A."/>
            <person name="Ehrlich S.D."/>
            <person name="Emmerson P.T."/>
            <person name="Entian K.-D."/>
            <person name="Errington J."/>
            <person name="Fabret C."/>
            <person name="Ferrari E."/>
            <person name="Foulger D."/>
            <person name="Fritz C."/>
            <person name="Fujita M."/>
            <person name="Fujita Y."/>
            <person name="Fuma S."/>
            <person name="Galizzi A."/>
            <person name="Galleron N."/>
            <person name="Ghim S.-Y."/>
            <person name="Glaser P."/>
            <person name="Goffeau A."/>
            <person name="Golightly E.J."/>
            <person name="Grandi G."/>
            <person name="Guiseppi G."/>
            <person name="Guy B.J."/>
            <person name="Haga K."/>
            <person name="Haiech J."/>
            <person name="Harwood C.R."/>
            <person name="Henaut A."/>
            <person name="Hilbert H."/>
            <person name="Holsappel S."/>
            <person name="Hosono S."/>
            <person name="Hullo M.-F."/>
            <person name="Itaya M."/>
            <person name="Jones L.-M."/>
            <person name="Joris B."/>
            <person name="Karamata D."/>
            <person name="Kasahara Y."/>
            <person name="Klaerr-Blanchard M."/>
            <person name="Klein C."/>
            <person name="Kobayashi Y."/>
            <person name="Koetter P."/>
            <person name="Koningstein G."/>
            <person name="Krogh S."/>
            <person name="Kumano M."/>
            <person name="Kurita K."/>
            <person name="Lapidus A."/>
            <person name="Lardinois S."/>
            <person name="Lauber J."/>
            <person name="Lazarevic V."/>
            <person name="Lee S.-M."/>
            <person name="Levine A."/>
            <person name="Liu H."/>
            <person name="Masuda S."/>
            <person name="Mauel C."/>
            <person name="Medigue C."/>
            <person name="Medina N."/>
            <person name="Mellado R.P."/>
            <person name="Mizuno M."/>
            <person name="Moestl D."/>
            <person name="Nakai S."/>
            <person name="Noback M."/>
            <person name="Noone D."/>
            <person name="O'Reilly M."/>
            <person name="Ogawa K."/>
            <person name="Ogiwara A."/>
            <person name="Oudega B."/>
            <person name="Park S.-H."/>
            <person name="Parro V."/>
            <person name="Pohl T.M."/>
            <person name="Portetelle D."/>
            <person name="Porwollik S."/>
            <person name="Prescott A.M."/>
            <person name="Presecan E."/>
            <person name="Pujic P."/>
            <person name="Purnelle B."/>
            <person name="Rapoport G."/>
            <person name="Rey M."/>
            <person name="Reynolds S."/>
            <person name="Rieger M."/>
            <person name="Rivolta C."/>
            <person name="Rocha E."/>
            <person name="Roche B."/>
            <person name="Rose M."/>
            <person name="Sadaie Y."/>
            <person name="Sato T."/>
            <person name="Scanlan E."/>
            <person name="Schleich S."/>
            <person name="Schroeter R."/>
            <person name="Scoffone F."/>
            <person name="Sekiguchi J."/>
            <person name="Sekowska A."/>
            <person name="Seror S.J."/>
            <person name="Serror P."/>
            <person name="Shin B.-S."/>
            <person name="Soldo B."/>
            <person name="Sorokin A."/>
            <person name="Tacconi E."/>
            <person name="Takagi T."/>
            <person name="Takahashi H."/>
            <person name="Takemaru K."/>
            <person name="Takeuchi M."/>
            <person name="Tamakoshi A."/>
            <person name="Tanaka T."/>
            <person name="Terpstra P."/>
            <person name="Tognoni A."/>
            <person name="Tosato V."/>
            <person name="Uchiyama S."/>
            <person name="Vandenbol M."/>
            <person name="Vannier F."/>
            <person name="Vassarotti A."/>
            <person name="Viari A."/>
            <person name="Wambutt R."/>
            <person name="Wedler E."/>
            <person name="Wedler H."/>
            <person name="Weitzenegger T."/>
            <person name="Winters P."/>
            <person name="Wipat A."/>
            <person name="Yamamoto H."/>
            <person name="Yamane K."/>
            <person name="Yasumoto K."/>
            <person name="Yata K."/>
            <person name="Yoshida K."/>
            <person name="Yoshikawa H.-F."/>
            <person name="Zumstein E."/>
            <person name="Yoshikawa H."/>
            <person name="Danchin A."/>
        </authorList>
    </citation>
    <scope>NUCLEOTIDE SEQUENCE [LARGE SCALE GENOMIC DNA]</scope>
    <source>
        <strain>168</strain>
    </source>
</reference>
<reference key="4">
    <citation type="journal article" date="2009" name="Microbiology">
        <title>From a consortium sequence to a unified sequence: the Bacillus subtilis 168 reference genome a decade later.</title>
        <authorList>
            <person name="Barbe V."/>
            <person name="Cruveiller S."/>
            <person name="Kunst F."/>
            <person name="Lenoble P."/>
            <person name="Meurice G."/>
            <person name="Sekowska A."/>
            <person name="Vallenet D."/>
            <person name="Wang T."/>
            <person name="Moszer I."/>
            <person name="Medigue C."/>
            <person name="Danchin A."/>
        </authorList>
    </citation>
    <scope>SEQUENCE REVISION TO 324</scope>
</reference>
<reference key="5">
    <citation type="journal article" date="2005" name="Biosci. Biotechnol. Biochem.">
        <title>Molecular properties and enhancement of thermostability by random mutagenesis of glutamate dehydrogenase from Bacillus subtilis.</title>
        <authorList>
            <person name="Khan M.I."/>
            <person name="Ito K."/>
            <person name="Kim H."/>
            <person name="Ashida H."/>
            <person name="Ishikawa T."/>
            <person name="Shibata H."/>
            <person name="Sawa Y."/>
        </authorList>
    </citation>
    <scope>PROTEIN SEQUENCE OF 1-15</scope>
    <scope>CATALYTIC ACTIVITY</scope>
    <scope>BIOPHYSICOCHEMICAL PROPERTIES</scope>
    <scope>SUBUNIT</scope>
    <scope>MASS SPECTROMETRY</scope>
    <scope>MUTAGENESIS OF GLU-27; GLN-144 AND ALA-324</scope>
    <source>
        <strain>ISW1214</strain>
    </source>
</reference>
<reference key="6">
    <citation type="journal article" date="1995" name="Mol. Gen. Genet.">
        <title>A binding site for activation by the Bacillus subtilis AhrC protein, a repressor/activator of arginine metabolism.</title>
        <authorList>
            <person name="Klingel U."/>
            <person name="Miller C.M."/>
            <person name="North A.K."/>
            <person name="Stockley P.G."/>
            <person name="Baumberg S."/>
        </authorList>
    </citation>
    <scope>NUCLEOTIDE SEQUENCE [GENOMIC DNA] OF 418-424</scope>
</reference>
<reference key="7">
    <citation type="journal article" date="1998" name="J. Bacteriol.">
        <title>Role and regulation of Bacillus subtilis glutamate dehydrogenase genes.</title>
        <authorList>
            <person name="Belitsky B.R."/>
            <person name="Sonenshein A.L."/>
        </authorList>
    </citation>
    <scope>FUNCTION AS A GLUTAMATE DEHYDROGENASE</scope>
    <scope>CATALYTIC ACTIVITY</scope>
    <scope>DISRUPTION PHENOTYPE</scope>
    <scope>SUBSTRATE SPECIFICITY</scope>
    <scope>INDUCTION</scope>
    <scope>NOMENCLATURE</scope>
    <source>
        <strain>168 / SMY</strain>
    </source>
</reference>
<reference key="8">
    <citation type="journal article" date="1999" name="Proc. Natl. Acad. Sci. U.S.A.">
        <title>An enhancer element located downstream of the major glutamate dehydrogenase gene of Bacillus subtilis.</title>
        <authorList>
            <person name="Belitsky B.R."/>
            <person name="Sonenshein A.L."/>
        </authorList>
    </citation>
    <scope>INDUCTION</scope>
    <source>
        <strain>168 / SMY</strain>
    </source>
</reference>
<reference key="9">
    <citation type="journal article" date="2007" name="J. Mol. Microbiol. Biotechnol.">
        <title>Characterization of Bacillus subtilis mutants with carbon source-independent glutamate biosynthesis.</title>
        <authorList>
            <person name="Commichau F.M."/>
            <person name="Wacker I."/>
            <person name="Schleider J."/>
            <person name="Blencke H.M."/>
            <person name="Reif I."/>
            <person name="Tripal P."/>
            <person name="Stulke J."/>
        </authorList>
    </citation>
    <scope>FUNCTION IN THE CONTROL OF GLTAB EXPRESSION</scope>
</reference>
<reference key="10">
    <citation type="journal article" date="2008" name="J. Bacteriol.">
        <title>Glutamate metabolism in Bacillus subtilis: gene expression and enzyme activities evolved to avoid futile cycles and to allow rapid responses to perturbations of the system.</title>
        <authorList>
            <person name="Commichau F.M."/>
            <person name="Gunka K."/>
            <person name="Landmann J.J."/>
            <person name="Stulke J."/>
        </authorList>
    </citation>
    <scope>FUNCTION IN GLUTAMATE DEGRADATION</scope>
</reference>
<reference key="11">
    <citation type="journal article" date="2004" name="J. Bacteriol.">
        <title>CcpA-dependent regulation of Bacillus subtilis glutamate dehydrogenase gene expression.</title>
        <authorList>
            <person name="Belitsky B.R."/>
            <person name="Kim H.J."/>
            <person name="Sonenshein A.L."/>
        </authorList>
    </citation>
    <scope>INDUCTION</scope>
</reference>
<reference key="12">
    <citation type="journal article" date="2007" name="Mol. Microbiol.">
        <title>A regulatory protein-protein interaction governs glutamate biosynthesis in Bacillus subtilis: the glutamate dehydrogenase RocG moonlights in controlling the transcription factor GltC.</title>
        <authorList>
            <person name="Commichau F.M."/>
            <person name="Herzberg C."/>
            <person name="Tripal P."/>
            <person name="Valerius O."/>
            <person name="Stulke J."/>
        </authorList>
    </citation>
    <scope>INHIBITORY INTERACTION WITH GLTC</scope>
    <scope>SUBUNIT</scope>
</reference>
<reference key="13">
    <citation type="journal article" date="2010" name="J. Mol. Biol.">
        <title>Functional dissection of a trigger enzyme: mutations of the bacillus subtilis glutamate dehydrogenase RocG that affect differentially its catalytic activity and regulatory properties.</title>
        <authorList>
            <person name="Gunka K."/>
            <person name="Newman J.A."/>
            <person name="Commichau F.M."/>
            <person name="Herzberg C."/>
            <person name="Rodrigues C."/>
            <person name="Hewitt L."/>
            <person name="Lewis R.J."/>
            <person name="Stulke J."/>
        </authorList>
    </citation>
    <scope>X-RAY CRYSTALLOGRAPHY (2.3 ANGSTROMS) OF MUTANT LYS-93</scope>
    <scope>CATALYTIC ACTIVITY</scope>
    <scope>MUTAGENESIS OF GLU-93; ASP-122; TYR-158 AND SER-234</scope>
    <scope>BIOPHYSICOCHEMICAL PROPERTIES</scope>
    <scope>SUBUNIT</scope>
</reference>
<proteinExistence type="evidence at protein level"/>
<comment type="function">
    <text evidence="4 6 9">Devoted to catabolic function of glutamate (and other amino acids of the glutamate family) utilization as sole nitrogen source. It is not involved in anabolic function of glutamate biosynthesis since B.subtilis possesses only one route of glutamate biosynthesis from ammonia, catalyzed by glutamate synthase. Wild-type cells are unable to utilize glutamate or glutamine as a sole carbon source; thus RocG does not function physiologically to synthesize glutamate, but it is involved in the utilization of arginine, and proline as carbon or nitrogen source (PubMed:9829940). The catabolic RocG is essential for controlling gltAB expression via an inhibitory interactions with the transcriptional regulator GltC in response to the availability of sugars (PubMed:15150224, PubMed:17183217).</text>
</comment>
<comment type="catalytic activity">
    <reaction evidence="5 9">
        <text>L-glutamate + NAD(+) + H2O = 2-oxoglutarate + NH4(+) + NADH + H(+)</text>
        <dbReference type="Rhea" id="RHEA:15133"/>
        <dbReference type="ChEBI" id="CHEBI:15377"/>
        <dbReference type="ChEBI" id="CHEBI:15378"/>
        <dbReference type="ChEBI" id="CHEBI:16810"/>
        <dbReference type="ChEBI" id="CHEBI:28938"/>
        <dbReference type="ChEBI" id="CHEBI:29985"/>
        <dbReference type="ChEBI" id="CHEBI:57540"/>
        <dbReference type="ChEBI" id="CHEBI:57945"/>
        <dbReference type="EC" id="1.4.1.2"/>
    </reaction>
    <physiologicalReaction direction="left-to-right" evidence="5 8">
        <dbReference type="Rhea" id="RHEA:15134"/>
    </physiologicalReaction>
</comment>
<comment type="biophysicochemical properties">
    <kinetics>
        <KM evidence="5 8">0.08 mM for NAD (at 37 degrees Celsius and at pH 7.3)</KM>
        <KM evidence="5 8">0.34 mM for L-glutamate (at 37 degrees Celsius and at pH 7.3)</KM>
        <KM evidence="5 8">2.9 mM for L-glutamate (at 37 degrees Celsius and at pH 7.3)</KM>
        <KM evidence="5 8">0.65 mM for 2-oxoglutarate (at 37 degrees Celsius and at pH 7.3)</KM>
        <KM evidence="5 8">2.9 mM for L-glutamate (at pH 7.3)</KM>
        <KM evidence="5 8">18.5 mM for ammonium (at pH 7.7)</KM>
        <KM evidence="5 8">55.6 mM for ammonium (at 37 degrees Celsius and at pH 7.3)</KM>
    </kinetics>
    <phDependence>
        <text evidence="5 8">Optimum pH is 7.7 and 7.3 for L-glutamate deamination and 2-oxoglutarate amination, respectively. Half-maximal activity for deamination is observed at pH 6.9 and 7.8 and that for amination is at pH 6.9 and 7.8.</text>
    </phDependence>
    <temperatureDependence>
        <text evidence="5 8">Low thermostability at 41 degrees Celsius due to the dissociation of the hexamer.</text>
    </temperatureDependence>
</comment>
<comment type="subunit">
    <text evidence="5 7 8">Homohexamer (PubMed:16244435, PubMed:20630473). Interacts with transcriptional regulator GltC (PubMed:17608797).</text>
</comment>
<comment type="interaction">
    <interactant intactId="EBI-1642022">
        <id>P39633</id>
    </interactant>
    <interactant intactId="EBI-1642006">
        <id>P20668</id>
        <label>gltC</label>
    </interactant>
    <organismsDiffer>false</organismsDiffer>
    <experiments>2</experiments>
</comment>
<comment type="induction">
    <text evidence="3 4 9">Enzyme activity is low in early exponential phase and reached higher levels in the middle and late stages of exponential growth (at protein level). Repressed by glucose; induced by arginine, ornithine, or to a lesser extent proline (in the absence of glucose). Not induced by glutamate or glutamine (PubMed:9829940). Expression depends on the alternative sigma-L factor and the transcription factor RocR (PubMed:10468601). Subject to direct CcpA-dependent glucose repression (PubMed:15150224).</text>
</comment>
<comment type="mass spectrometry"/>
<comment type="disruption phenotype">
    <text evidence="9">Cells lacking this gene lose the ability to utilize proline, ornithine, or arginine as sole carbon source and grow more slowly when proline or ornithine is utilized as sole nitrogen source in the presence of glucose. A double rocG-gudB disruption has the same phenotype as a single rocG disruption.</text>
</comment>
<comment type="similarity">
    <text evidence="11">Belongs to the Glu/Leu/Phe/Val dehydrogenases family.</text>
</comment>
<sequence>MSAKQVSKDEEKEALNLFLSTQTIIKEALRKLGYPGDMYELMKEPQRMLTVRIPVKMDNGSVKVFTGYRSQHNDAVGPTKGGVRFHPEVNEEEVKALSIWMTLKCGIANLPYGGGKGGIICDPRTMSFGELERLSRGYVRAISQIVGPTKDIPAPDVYTNSQIMAWMMDEYSRLREFDSPGFITGKPLVLGGSQGRETATAQGVTICIEEAVKKKGIKLQNARIIIQGFGNAGSFLAKFMHDAGAKVIGISDANGGLYNPDGLDIPYLLDKRDSFGMVTNLFTDVITNEELLEKDCDILVPAAISNQITAKNAHNIQASIVVEAANGPTTIDATKILNERGVLLVPDILASAGGVTVSYFEWVQNNQGYYWSEEEVAEKLRSVMVSSFETIYQTAATHKVDMRLAAYMTGIRKSAEASRFRGWV</sequence>
<accession>P39633</accession>
<accession>Q53548</accession>
<accession>Q5W7E9</accession>
<protein>
    <recommendedName>
        <fullName>Catabolic NAD-specific glutamate dehydrogenase RocG</fullName>
        <shortName>NAD-GDH</shortName>
        <ecNumber evidence="5 8 9">1.4.1.2</ecNumber>
    </recommendedName>
    <alternativeName>
        <fullName>Glutamate dehydrogenase</fullName>
        <shortName evidence="10">GlutDH</shortName>
    </alternativeName>
    <alternativeName>
        <fullName>Trigger enzyme RocG</fullName>
    </alternativeName>
</protein>
<feature type="chain" id="PRO_0000182735" description="Catabolic NAD-specific glutamate dehydrogenase RocG">
    <location>
        <begin position="1"/>
        <end position="424"/>
    </location>
</feature>
<feature type="active site" description="Proton donor" evidence="2">
    <location>
        <position position="116"/>
    </location>
</feature>
<feature type="binding site" evidence="1">
    <location>
        <position position="80"/>
    </location>
    <ligand>
        <name>substrate</name>
    </ligand>
</feature>
<feature type="binding site" evidence="1">
    <location>
        <position position="104"/>
    </location>
    <ligand>
        <name>substrate</name>
    </ligand>
</feature>
<feature type="binding site" evidence="1">
    <location>
        <position position="200"/>
    </location>
    <ligand>
        <name>NAD(+)</name>
        <dbReference type="ChEBI" id="CHEBI:57540"/>
    </ligand>
</feature>
<feature type="binding site" evidence="1">
    <location>
        <position position="231"/>
    </location>
    <ligand>
        <name>NAD(+)</name>
        <dbReference type="ChEBI" id="CHEBI:57540"/>
    </ligand>
</feature>
<feature type="binding site" evidence="1">
    <location>
        <position position="358"/>
    </location>
    <ligand>
        <name>substrate</name>
    </ligand>
</feature>
<feature type="site" description="Important for catalysis" evidence="1">
    <location>
        <position position="156"/>
    </location>
</feature>
<feature type="mutagenesis site" description="Increase of thermostability 8 degrees Celsius higher than that of the wild-type." evidence="5">
    <original>E</original>
    <variation>F</variation>
    <location>
        <position position="27"/>
    </location>
</feature>
<feature type="mutagenesis site" description="Reduces the affinity for glutamate and ammonium." evidence="8">
    <original>E</original>
    <variation>K</variation>
    <location>
        <position position="93"/>
    </location>
</feature>
<feature type="mutagenesis site" description="Unable to control gltAB expression via an inhibitory interactions with the transcriptional regulator GltC. Reduces the affinity for glutamate and ammonium." evidence="8">
    <original>D</original>
    <variation>N</variation>
    <location>
        <position position="122"/>
    </location>
</feature>
<feature type="mutagenesis site" description="Increase of thermostability 20 degrees Celsius higher than that of the wild-type." evidence="5">
    <original>Q</original>
    <variation>R</variation>
    <location>
        <position position="144"/>
    </location>
</feature>
<feature type="mutagenesis site" description="Reduces the affinity for glutamate and ammonium." evidence="8">
    <original>Y</original>
    <variation>H</variation>
    <location>
        <position position="158"/>
    </location>
</feature>
<feature type="mutagenesis site" description="Reduces the affinity for glutamate and ammonium." evidence="8">
    <original>S</original>
    <variation>R</variation>
    <location>
        <position position="234"/>
    </location>
</feature>
<feature type="mutagenesis site" description="No effect." evidence="5">
    <original>A</original>
    <variation>R</variation>
    <location>
        <position position="324"/>
    </location>
</feature>
<feature type="sequence conflict" description="In Ref. 1; CAA51631." evidence="11" ref="1">
    <original>A</original>
    <variation>R</variation>
    <location>
        <position position="324"/>
    </location>
</feature>
<feature type="sequence conflict" description="In Ref. 1; CAA51631." evidence="11" ref="1">
    <original>RFRGWV</original>
    <variation>FPRMGLI</variation>
    <location>
        <begin position="419"/>
        <end position="424"/>
    </location>
</feature>
<feature type="helix" evidence="12">
    <location>
        <begin position="8"/>
        <end position="31"/>
    </location>
</feature>
<feature type="helix" evidence="12">
    <location>
        <begin position="36"/>
        <end position="42"/>
    </location>
</feature>
<feature type="strand" evidence="12">
    <location>
        <begin position="46"/>
        <end position="56"/>
    </location>
</feature>
<feature type="strand" evidence="12">
    <location>
        <begin position="62"/>
        <end position="71"/>
    </location>
</feature>
<feature type="strand" evidence="12">
    <location>
        <begin position="75"/>
        <end position="80"/>
    </location>
</feature>
<feature type="strand" evidence="12">
    <location>
        <begin position="83"/>
        <end position="86"/>
    </location>
</feature>
<feature type="helix" evidence="12">
    <location>
        <begin position="91"/>
        <end position="107"/>
    </location>
</feature>
<feature type="strand" evidence="12">
    <location>
        <begin position="113"/>
        <end position="120"/>
    </location>
</feature>
<feature type="helix" evidence="12">
    <location>
        <begin position="123"/>
        <end position="125"/>
    </location>
</feature>
<feature type="helix" evidence="12">
    <location>
        <begin position="128"/>
        <end position="142"/>
    </location>
</feature>
<feature type="helix" evidence="12">
    <location>
        <begin position="143"/>
        <end position="145"/>
    </location>
</feature>
<feature type="turn" evidence="12">
    <location>
        <begin position="148"/>
        <end position="150"/>
    </location>
</feature>
<feature type="helix" evidence="12">
    <location>
        <begin position="161"/>
        <end position="175"/>
    </location>
</feature>
<feature type="helix" evidence="12">
    <location>
        <begin position="180"/>
        <end position="182"/>
    </location>
</feature>
<feature type="helix" evidence="12">
    <location>
        <begin position="188"/>
        <end position="190"/>
    </location>
</feature>
<feature type="turn" evidence="12">
    <location>
        <begin position="194"/>
        <end position="198"/>
    </location>
</feature>
<feature type="helix" evidence="12">
    <location>
        <begin position="199"/>
        <end position="214"/>
    </location>
</feature>
<feature type="helix" evidence="12">
    <location>
        <begin position="219"/>
        <end position="221"/>
    </location>
</feature>
<feature type="strand" evidence="12">
    <location>
        <begin position="223"/>
        <end position="227"/>
    </location>
</feature>
<feature type="helix" evidence="12">
    <location>
        <begin position="231"/>
        <end position="243"/>
    </location>
</feature>
<feature type="strand" evidence="12">
    <location>
        <begin position="246"/>
        <end position="251"/>
    </location>
</feature>
<feature type="strand" evidence="12">
    <location>
        <begin position="256"/>
        <end position="258"/>
    </location>
</feature>
<feature type="helix" evidence="12">
    <location>
        <begin position="265"/>
        <end position="271"/>
    </location>
</feature>
<feature type="strand" evidence="12">
    <location>
        <begin position="274"/>
        <end position="276"/>
    </location>
</feature>
<feature type="helix" evidence="12">
    <location>
        <begin position="279"/>
        <end position="281"/>
    </location>
</feature>
<feature type="helix" evidence="12">
    <location>
        <begin position="288"/>
        <end position="293"/>
    </location>
</feature>
<feature type="strand" evidence="12">
    <location>
        <begin position="297"/>
        <end position="301"/>
    </location>
</feature>
<feature type="turn" evidence="12">
    <location>
        <begin position="310"/>
        <end position="312"/>
    </location>
</feature>
<feature type="helix" evidence="12">
    <location>
        <begin position="313"/>
        <end position="315"/>
    </location>
</feature>
<feature type="strand" evidence="12">
    <location>
        <begin position="319"/>
        <end position="322"/>
    </location>
</feature>
<feature type="strand" evidence="12">
    <location>
        <begin position="325"/>
        <end position="327"/>
    </location>
</feature>
<feature type="helix" evidence="12">
    <location>
        <begin position="331"/>
        <end position="339"/>
    </location>
</feature>
<feature type="strand" evidence="12">
    <location>
        <begin position="343"/>
        <end position="345"/>
    </location>
</feature>
<feature type="helix" evidence="12">
    <location>
        <begin position="347"/>
        <end position="350"/>
    </location>
</feature>
<feature type="helix" evidence="12">
    <location>
        <begin position="353"/>
        <end position="367"/>
    </location>
</feature>
<feature type="helix" evidence="12">
    <location>
        <begin position="373"/>
        <end position="398"/>
    </location>
</feature>
<feature type="helix" evidence="12">
    <location>
        <begin position="402"/>
        <end position="420"/>
    </location>
</feature>
<evidence type="ECO:0000250" key="1"/>
<evidence type="ECO:0000255" key="2">
    <source>
        <dbReference type="PROSITE-ProRule" id="PRU10011"/>
    </source>
</evidence>
<evidence type="ECO:0000269" key="3">
    <source>
    </source>
</evidence>
<evidence type="ECO:0000269" key="4">
    <source>
    </source>
</evidence>
<evidence type="ECO:0000269" key="5">
    <source>
    </source>
</evidence>
<evidence type="ECO:0000269" key="6">
    <source>
    </source>
</evidence>
<evidence type="ECO:0000269" key="7">
    <source>
    </source>
</evidence>
<evidence type="ECO:0000269" key="8">
    <source>
    </source>
</evidence>
<evidence type="ECO:0000269" key="9">
    <source>
    </source>
</evidence>
<evidence type="ECO:0000303" key="10">
    <source>
    </source>
</evidence>
<evidence type="ECO:0000305" key="11"/>
<evidence type="ECO:0007829" key="12">
    <source>
        <dbReference type="PDB" id="3K92"/>
    </source>
</evidence>
<name>DHE2_BACSU</name>
<gene>
    <name evidence="10" type="primary">rocG</name>
    <name evidence="10" type="synonym">gudA</name>
    <name type="synonym">yweB</name>
    <name type="ordered locus">BSU37790</name>
    <name type="ORF">ipa-75d</name>
</gene>